<organism>
    <name type="scientific">Mus musculus</name>
    <name type="common">Mouse</name>
    <dbReference type="NCBI Taxonomy" id="10090"/>
    <lineage>
        <taxon>Eukaryota</taxon>
        <taxon>Metazoa</taxon>
        <taxon>Chordata</taxon>
        <taxon>Craniata</taxon>
        <taxon>Vertebrata</taxon>
        <taxon>Euteleostomi</taxon>
        <taxon>Mammalia</taxon>
        <taxon>Eutheria</taxon>
        <taxon>Euarchontoglires</taxon>
        <taxon>Glires</taxon>
        <taxon>Rodentia</taxon>
        <taxon>Myomorpha</taxon>
        <taxon>Muroidea</taxon>
        <taxon>Muridae</taxon>
        <taxon>Murinae</taxon>
        <taxon>Mus</taxon>
        <taxon>Mus</taxon>
    </lineage>
</organism>
<feature type="chain" id="PRO_0000244362" description="Ankyrin repeat domain-containing protein 37">
    <location>
        <begin position="1"/>
        <end position="159"/>
    </location>
</feature>
<feature type="repeat" description="ANK 1">
    <location>
        <begin position="1"/>
        <end position="25"/>
    </location>
</feature>
<feature type="repeat" description="ANK 2">
    <location>
        <begin position="30"/>
        <end position="59"/>
    </location>
</feature>
<feature type="repeat" description="ANK 3">
    <location>
        <begin position="63"/>
        <end position="92"/>
    </location>
</feature>
<feature type="short sequence motif" description="Nuclear localization signal" evidence="1">
    <location>
        <begin position="130"/>
        <end position="150"/>
    </location>
</feature>
<comment type="subcellular location">
    <subcellularLocation>
        <location evidence="1">Nucleus</location>
    </subcellularLocation>
    <subcellularLocation>
        <location evidence="1">Cytoplasm</location>
    </subcellularLocation>
    <text evidence="1">Present in the cytoplasm of elongating spermatids of the stages IX-X seminiferous tubules while it is localizes to the nucleus of spermatozoa of the stages VII-VIII tubules and mature spermatozoa isolated from epididymis.</text>
</comment>
<comment type="tissue specificity">
    <text evidence="1">Expressed testis, ovary, uterus, kidney, liver, but not in other tissues.</text>
</comment>
<comment type="PTM">
    <text evidence="1">Ubiquitinated by the CRL2(FEM1B) complex, leading to its degradation.</text>
</comment>
<accession>Q569N2</accession>
<accession>Q8CHS0</accession>
<dbReference type="EMBL" id="BC039642">
    <property type="protein sequence ID" value="AAH39642.2"/>
    <property type="molecule type" value="mRNA"/>
</dbReference>
<dbReference type="EMBL" id="BC092377">
    <property type="protein sequence ID" value="AAH92377.1"/>
    <property type="molecule type" value="mRNA"/>
</dbReference>
<dbReference type="CCDS" id="CCDS22285.1"/>
<dbReference type="RefSeq" id="NP_001034651.1">
    <property type="nucleotide sequence ID" value="NM_001039562.2"/>
</dbReference>
<dbReference type="SMR" id="Q569N2"/>
<dbReference type="BioGRID" id="576636">
    <property type="interactions" value="1"/>
</dbReference>
<dbReference type="FunCoup" id="Q569N2">
    <property type="interactions" value="554"/>
</dbReference>
<dbReference type="STRING" id="10090.ENSMUSP00000056828"/>
<dbReference type="PhosphoSitePlus" id="Q569N2"/>
<dbReference type="PaxDb" id="10090-ENSMUSP00000056828"/>
<dbReference type="Antibodypedia" id="52255">
    <property type="antibodies" value="106 antibodies from 19 providers"/>
</dbReference>
<dbReference type="Ensembl" id="ENSMUST00000053558.10">
    <property type="protein sequence ID" value="ENSMUSP00000056828.9"/>
    <property type="gene ID" value="ENSMUSG00000050914.17"/>
</dbReference>
<dbReference type="GeneID" id="654824"/>
<dbReference type="KEGG" id="mmu:654824"/>
<dbReference type="UCSC" id="uc009lpr.1">
    <property type="organism name" value="mouse"/>
</dbReference>
<dbReference type="AGR" id="MGI:3603344"/>
<dbReference type="CTD" id="353322"/>
<dbReference type="MGI" id="MGI:3603344">
    <property type="gene designation" value="Ankrd37"/>
</dbReference>
<dbReference type="VEuPathDB" id="HostDB:ENSMUSG00000050914"/>
<dbReference type="eggNOG" id="KOG0504">
    <property type="taxonomic scope" value="Eukaryota"/>
</dbReference>
<dbReference type="GeneTree" id="ENSGT00940000154216"/>
<dbReference type="HOGENOM" id="CLU_000134_42_0_1"/>
<dbReference type="InParanoid" id="Q569N2"/>
<dbReference type="OMA" id="CNPEADG"/>
<dbReference type="OrthoDB" id="5402602at2759"/>
<dbReference type="PhylomeDB" id="Q569N2"/>
<dbReference type="TreeFam" id="TF338463"/>
<dbReference type="BioGRID-ORCS" id="654824">
    <property type="hits" value="2 hits in 76 CRISPR screens"/>
</dbReference>
<dbReference type="ChiTaRS" id="Ankrd37">
    <property type="organism name" value="mouse"/>
</dbReference>
<dbReference type="PRO" id="PR:Q569N2"/>
<dbReference type="Proteomes" id="UP000000589">
    <property type="component" value="Chromosome 8"/>
</dbReference>
<dbReference type="RNAct" id="Q569N2">
    <property type="molecule type" value="protein"/>
</dbReference>
<dbReference type="Bgee" id="ENSMUSG00000050914">
    <property type="expression patterns" value="Expressed in left lung lobe and 187 other cell types or tissues"/>
</dbReference>
<dbReference type="ExpressionAtlas" id="Q569N2">
    <property type="expression patterns" value="baseline and differential"/>
</dbReference>
<dbReference type="GO" id="GO:0005737">
    <property type="term" value="C:cytoplasm"/>
    <property type="evidence" value="ECO:0000314"/>
    <property type="project" value="MGI"/>
</dbReference>
<dbReference type="GO" id="GO:0005829">
    <property type="term" value="C:cytosol"/>
    <property type="evidence" value="ECO:0007669"/>
    <property type="project" value="Ensembl"/>
</dbReference>
<dbReference type="GO" id="GO:0001673">
    <property type="term" value="C:male germ cell nucleus"/>
    <property type="evidence" value="ECO:0000314"/>
    <property type="project" value="MGI"/>
</dbReference>
<dbReference type="GO" id="GO:0005739">
    <property type="term" value="C:mitochondrion"/>
    <property type="evidence" value="ECO:0007669"/>
    <property type="project" value="Ensembl"/>
</dbReference>
<dbReference type="GO" id="GO:0005654">
    <property type="term" value="C:nucleoplasm"/>
    <property type="evidence" value="ECO:0007669"/>
    <property type="project" value="Ensembl"/>
</dbReference>
<dbReference type="FunFam" id="1.25.40.20:FF:000234">
    <property type="entry name" value="ankyrin repeat domain-containing protein 37 isoform X2"/>
    <property type="match status" value="1"/>
</dbReference>
<dbReference type="Gene3D" id="1.25.40.20">
    <property type="entry name" value="Ankyrin repeat-containing domain"/>
    <property type="match status" value="1"/>
</dbReference>
<dbReference type="InterPro" id="IPR050776">
    <property type="entry name" value="Ank_Repeat/CDKN_Inhibitor"/>
</dbReference>
<dbReference type="InterPro" id="IPR002110">
    <property type="entry name" value="Ankyrin_rpt"/>
</dbReference>
<dbReference type="InterPro" id="IPR036770">
    <property type="entry name" value="Ankyrin_rpt-contain_sf"/>
</dbReference>
<dbReference type="PANTHER" id="PTHR24201">
    <property type="entry name" value="ANK_REP_REGION DOMAIN-CONTAINING PROTEIN"/>
    <property type="match status" value="1"/>
</dbReference>
<dbReference type="PANTHER" id="PTHR24201:SF0">
    <property type="entry name" value="ANKYRIN REPEAT DOMAIN-CONTAINING PROTEIN 37"/>
    <property type="match status" value="1"/>
</dbReference>
<dbReference type="Pfam" id="PF12796">
    <property type="entry name" value="Ank_2"/>
    <property type="match status" value="1"/>
</dbReference>
<dbReference type="SMART" id="SM00248">
    <property type="entry name" value="ANK"/>
    <property type="match status" value="2"/>
</dbReference>
<dbReference type="SUPFAM" id="SSF48403">
    <property type="entry name" value="Ankyrin repeat"/>
    <property type="match status" value="1"/>
</dbReference>
<dbReference type="PROSITE" id="PS50297">
    <property type="entry name" value="ANK_REP_REGION"/>
    <property type="match status" value="1"/>
</dbReference>
<dbReference type="PROSITE" id="PS50088">
    <property type="entry name" value="ANK_REPEAT"/>
    <property type="match status" value="1"/>
</dbReference>
<sequence>MLLLSCNLEEDDLKSLLETGASVNAPPDPQEQSPAHLAAGGGLACFLLWQLQTGADLNQQDVLGETPLHKAAKVGSLDCLSLLVASDVQIGVCNKNGQTAEDLAWSYGFPECARFLTMIKCMQTARSSGEQQERDPRAPVLRQKRSFRTVESGVMKRKC</sequence>
<reference key="1">
    <citation type="journal article" date="2004" name="Genome Res.">
        <title>The status, quality, and expansion of the NIH full-length cDNA project: the Mammalian Gene Collection (MGC).</title>
        <authorList>
            <consortium name="The MGC Project Team"/>
        </authorList>
    </citation>
    <scope>NUCLEOTIDE SEQUENCE [LARGE SCALE MRNA]</scope>
    <source>
        <strain>C57BL/6J</strain>
        <strain>FVB/N</strain>
        <tissue>Brain</tissue>
        <tissue>Mammary gland</tissue>
    </source>
</reference>
<reference key="2">
    <citation type="journal article" date="2011" name="Gene">
        <title>Mouse Fem1b interacts with and induces ubiquitin-mediated degradation of Ankrd37.</title>
        <authorList>
            <person name="Shi Y.Q."/>
            <person name="Liao S.Y."/>
            <person name="Zhuang X.J."/>
            <person name="Han C.S."/>
        </authorList>
    </citation>
    <scope>SUBCELLULAR LOCATION</scope>
    <scope>TISSUE SPECIFICITY</scope>
    <scope>UBIQUITINATION</scope>
</reference>
<proteinExistence type="evidence at protein level"/>
<keyword id="KW-0040">ANK repeat</keyword>
<keyword id="KW-0963">Cytoplasm</keyword>
<keyword id="KW-0539">Nucleus</keyword>
<keyword id="KW-1185">Reference proteome</keyword>
<keyword id="KW-0677">Repeat</keyword>
<keyword id="KW-0832">Ubl conjugation</keyword>
<evidence type="ECO:0000269" key="1">
    <source>
    </source>
</evidence>
<evidence type="ECO:0000303" key="2">
    <source>
    </source>
</evidence>
<evidence type="ECO:0000305" key="3"/>
<evidence type="ECO:0000312" key="4">
    <source>
        <dbReference type="MGI" id="MGI:3603344"/>
    </source>
</evidence>
<gene>
    <name evidence="2 4" type="primary">Ankrd37</name>
</gene>
<name>ANR37_MOUSE</name>
<protein>
    <recommendedName>
        <fullName evidence="3">Ankyrin repeat domain-containing protein 37</fullName>
    </recommendedName>
</protein>